<proteinExistence type="predicted"/>
<protein>
    <recommendedName>
        <fullName>Uncharacterized 36.6 kDa protein in EGT-IAP1 intergenic region</fullName>
    </recommendedName>
    <alternativeName>
        <fullName>ORF12/11</fullName>
    </alternativeName>
</protein>
<keyword id="KW-1185">Reference proteome</keyword>
<organismHost>
    <name type="scientific">Lepidoptera</name>
    <name type="common">butterflies and moths</name>
    <dbReference type="NCBI Taxonomy" id="7088"/>
</organismHost>
<comment type="sequence caution" evidence="2">
    <conflict type="frameshift">
        <sequence resource="EMBL-CDS" id="AAA66794"/>
    </conflict>
</comment>
<comment type="sequence caution" evidence="2">
    <conflict type="frameshift">
        <sequence resource="EMBL-CDS" id="AAA66795"/>
    </conflict>
</comment>
<sequence length="316" mass="36554">MATKRKIGDGYSSSDDNQPKRERSEGGEDQQLVPYNSGAFNVKHDETGVMCYFTPSSIQLEPHELTKMLWQEQMAINVKRGNFSILNCSCFEGRFLKNEFCRLSNLNSLHEWEDKLYPEPDKNIVVLEPANGKTTYTIGPRVQGKPCGFWFSDFGTIKRAKSNFGQFFSIQYGDIHKHNNIFGNILQKHLQSDFPLKMEPNVCIHLPDKNKTSERDMLIRRFYIINRDNNGSIYATGKIRNVPLDMQRMSVEDFDRLFEMDKIDGPSEEIKMYMMGTIDGVKYGKEMQMTDMNNKKITEKPYSLAFKPGIFVIIEQ</sequence>
<reference key="1">
    <citation type="journal article" date="1994" name="Virology">
        <title>The complete DNA sequence of Autographa californica nuclear polyhedrosis virus.</title>
        <authorList>
            <person name="Ayres M.D."/>
            <person name="Howard S.C."/>
            <person name="Kuzio J."/>
            <person name="Lopez-Ferber M."/>
            <person name="Possee R.D."/>
        </authorList>
    </citation>
    <scope>NUCLEOTIDE SEQUENCE [LARGE SCALE GENOMIC DNA]</scope>
    <source>
        <strain>C6</strain>
    </source>
</reference>
<reference key="2">
    <citation type="journal article" date="1992" name="Virology">
        <title>Sequence, genomic organization of the EcoRI-A fragment of Autographa californica nuclear polyhedrosis virus, and identification of a viral-encoded protein resembling the outer capsid protein VP8 of rotavirus.</title>
        <authorList>
            <person name="Braunagel S.C."/>
            <person name="Daniel K.D."/>
            <person name="Reilly L.M."/>
            <person name="Guarino L.A."/>
            <person name="Hong T."/>
            <person name="Summers M.D."/>
        </authorList>
    </citation>
    <scope>NUCLEOTIDE SEQUENCE [GENOMIC DNA]</scope>
    <source>
        <strain>E2</strain>
    </source>
</reference>
<feature type="chain" id="PRO_0000132962" description="Uncharacterized 36.6 kDa protein in EGT-IAP1 intergenic region">
    <location>
        <begin position="1"/>
        <end position="316"/>
    </location>
</feature>
<feature type="region of interest" description="Disordered" evidence="1">
    <location>
        <begin position="1"/>
        <end position="34"/>
    </location>
</feature>
<feature type="compositionally biased region" description="Basic and acidic residues" evidence="1">
    <location>
        <begin position="17"/>
        <end position="26"/>
    </location>
</feature>
<feature type="sequence conflict" description="In Ref. 2; AAA66794." evidence="2" ref="2">
    <original>M</original>
    <variation>I</variation>
    <location>
        <position position="246"/>
    </location>
</feature>
<dbReference type="EMBL" id="L22858">
    <property type="protein sequence ID" value="AAA66655.1"/>
    <property type="molecule type" value="Genomic_DNA"/>
</dbReference>
<dbReference type="EMBL" id="M96361">
    <property type="protein sequence ID" value="AAA66794.1"/>
    <property type="status" value="ALT_FRAME"/>
    <property type="molecule type" value="Genomic_DNA"/>
</dbReference>
<dbReference type="EMBL" id="M96361">
    <property type="protein sequence ID" value="AAA66795.1"/>
    <property type="status" value="ALT_FRAME"/>
    <property type="molecule type" value="Genomic_DNA"/>
</dbReference>
<dbReference type="PIR" id="A72853">
    <property type="entry name" value="A72853"/>
</dbReference>
<dbReference type="PIR" id="C36828">
    <property type="entry name" value="C36828"/>
</dbReference>
<dbReference type="RefSeq" id="NP_054054.1">
    <property type="nucleotide sequence ID" value="NC_001623.1"/>
</dbReference>
<dbReference type="GeneID" id="1403857"/>
<dbReference type="KEGG" id="vg:1403857"/>
<dbReference type="OrthoDB" id="23658at10239"/>
<dbReference type="Proteomes" id="UP000008292">
    <property type="component" value="Segment"/>
</dbReference>
<dbReference type="InterPro" id="IPR006871">
    <property type="entry name" value="ssDNA-bd_baculovirus"/>
</dbReference>
<dbReference type="Pfam" id="PF04786">
    <property type="entry name" value="Baculo_DNA_bind"/>
    <property type="match status" value="1"/>
</dbReference>
<name>Y025_NPVAC</name>
<organism>
    <name type="scientific">Autographa californica nuclear polyhedrosis virus</name>
    <name type="common">AcMNPV</name>
    <dbReference type="NCBI Taxonomy" id="46015"/>
    <lineage>
        <taxon>Viruses</taxon>
        <taxon>Viruses incertae sedis</taxon>
        <taxon>Naldaviricetes</taxon>
        <taxon>Lefavirales</taxon>
        <taxon>Baculoviridae</taxon>
        <taxon>Alphabaculovirus</taxon>
        <taxon>Alphabaculovirus aucalifornicae</taxon>
    </lineage>
</organism>
<evidence type="ECO:0000256" key="1">
    <source>
        <dbReference type="SAM" id="MobiDB-lite"/>
    </source>
</evidence>
<evidence type="ECO:0000305" key="2"/>
<accession>P41430</accession>